<feature type="chain" id="PRO_0000140126" description="GMP synthase [glutamine-hydrolyzing]">
    <location>
        <begin position="1"/>
        <end position="520"/>
    </location>
</feature>
<feature type="domain" description="Glutamine amidotransferase type-1" evidence="1">
    <location>
        <begin position="12"/>
        <end position="202"/>
    </location>
</feature>
<feature type="domain" description="GMPS ATP-PPase" evidence="1">
    <location>
        <begin position="203"/>
        <end position="395"/>
    </location>
</feature>
<feature type="active site" description="Nucleophile" evidence="1">
    <location>
        <position position="89"/>
    </location>
</feature>
<feature type="active site" evidence="1">
    <location>
        <position position="176"/>
    </location>
</feature>
<feature type="active site" evidence="1">
    <location>
        <position position="178"/>
    </location>
</feature>
<feature type="binding site" evidence="1">
    <location>
        <begin position="230"/>
        <end position="236"/>
    </location>
    <ligand>
        <name>ATP</name>
        <dbReference type="ChEBI" id="CHEBI:30616"/>
    </ligand>
</feature>
<name>GUAA_ENTFA</name>
<sequence>MTNVADLTSVEKIIVLDFGSQFNQLITRRIREFGVFSELLSHRTTAEEIRKIAPKGIIFSGGPNSVYDKDAFSIDPEIYELGIPILGICYGMQLMTHNLGGKVEPAANREYGKAELEILGDATLFQGTPAKQTVWMSHGDLVTEIAPGFEKVGTSNDCPIASIEDANRKFYGVQFHPEVRHSEYGNDLLRHFAFDVCGCTGDWSMENFIDMEVAKIREQVGDKKVLLGLSGGVDSSVVGVLLQKAIGDQLTCIFVDHGLLRKGEAEQVMESLGGKFGLNIIKVDAKERFLSKLAGVSDPEQKRKIIGNEFVYVFDDEATKLAGEEGVSFLAQGTLYTDVIESGTETAQTIKSHHNVGGLPEDMQFELIEPLNTLFKDEVRALGTELGMPDAIVWRQPFPGPGLGIRVLGEITEDKLQIVRDSDAILREEIAAAGLDRDIWQYFTVLPGIRSVGVMGDGRTYDYTVGIRAVTSIDGMTADFARIPWDVLQKISVRIVNEVAHVNRIVYDITSKPPATVEWE</sequence>
<gene>
    <name evidence="1" type="primary">guaA</name>
    <name type="ordered locus">EF_0167</name>
</gene>
<accession>Q839J8</accession>
<proteinExistence type="inferred from homology"/>
<keyword id="KW-0067">ATP-binding</keyword>
<keyword id="KW-0315">Glutamine amidotransferase</keyword>
<keyword id="KW-0332">GMP biosynthesis</keyword>
<keyword id="KW-0436">Ligase</keyword>
<keyword id="KW-0547">Nucleotide-binding</keyword>
<keyword id="KW-0658">Purine biosynthesis</keyword>
<keyword id="KW-1185">Reference proteome</keyword>
<reference key="1">
    <citation type="journal article" date="2003" name="Science">
        <title>Role of mobile DNA in the evolution of vancomycin-resistant Enterococcus faecalis.</title>
        <authorList>
            <person name="Paulsen I.T."/>
            <person name="Banerjei L."/>
            <person name="Myers G.S.A."/>
            <person name="Nelson K.E."/>
            <person name="Seshadri R."/>
            <person name="Read T.D."/>
            <person name="Fouts D.E."/>
            <person name="Eisen J.A."/>
            <person name="Gill S.R."/>
            <person name="Heidelberg J.F."/>
            <person name="Tettelin H."/>
            <person name="Dodson R.J."/>
            <person name="Umayam L.A."/>
            <person name="Brinkac L.M."/>
            <person name="Beanan M.J."/>
            <person name="Daugherty S.C."/>
            <person name="DeBoy R.T."/>
            <person name="Durkin S.A."/>
            <person name="Kolonay J.F."/>
            <person name="Madupu R."/>
            <person name="Nelson W.C."/>
            <person name="Vamathevan J.J."/>
            <person name="Tran B."/>
            <person name="Upton J."/>
            <person name="Hansen T."/>
            <person name="Shetty J."/>
            <person name="Khouri H.M."/>
            <person name="Utterback T.R."/>
            <person name="Radune D."/>
            <person name="Ketchum K.A."/>
            <person name="Dougherty B.A."/>
            <person name="Fraser C.M."/>
        </authorList>
    </citation>
    <scope>NUCLEOTIDE SEQUENCE [LARGE SCALE GENOMIC DNA]</scope>
    <source>
        <strain>ATCC 700802 / V583</strain>
    </source>
</reference>
<dbReference type="EC" id="6.3.5.2" evidence="1"/>
<dbReference type="EMBL" id="AE016830">
    <property type="protein sequence ID" value="AAO80041.1"/>
    <property type="molecule type" value="Genomic_DNA"/>
</dbReference>
<dbReference type="RefSeq" id="NP_813969.1">
    <property type="nucleotide sequence ID" value="NC_004668.1"/>
</dbReference>
<dbReference type="RefSeq" id="WP_002356158.1">
    <property type="nucleotide sequence ID" value="NZ_KE136524.1"/>
</dbReference>
<dbReference type="SMR" id="Q839J8"/>
<dbReference type="STRING" id="226185.EF_0167"/>
<dbReference type="MEROPS" id="C26.957"/>
<dbReference type="EnsemblBacteria" id="AAO80041">
    <property type="protein sequence ID" value="AAO80041"/>
    <property type="gene ID" value="EF_0167"/>
</dbReference>
<dbReference type="GeneID" id="60892669"/>
<dbReference type="KEGG" id="efa:EF0167"/>
<dbReference type="PATRIC" id="fig|226185.45.peg.94"/>
<dbReference type="eggNOG" id="COG0518">
    <property type="taxonomic scope" value="Bacteria"/>
</dbReference>
<dbReference type="eggNOG" id="COG0519">
    <property type="taxonomic scope" value="Bacteria"/>
</dbReference>
<dbReference type="HOGENOM" id="CLU_014340_0_5_9"/>
<dbReference type="UniPathway" id="UPA00189">
    <property type="reaction ID" value="UER00296"/>
</dbReference>
<dbReference type="Proteomes" id="UP000001415">
    <property type="component" value="Chromosome"/>
</dbReference>
<dbReference type="GO" id="GO:0005829">
    <property type="term" value="C:cytosol"/>
    <property type="evidence" value="ECO:0007669"/>
    <property type="project" value="TreeGrafter"/>
</dbReference>
<dbReference type="GO" id="GO:0005524">
    <property type="term" value="F:ATP binding"/>
    <property type="evidence" value="ECO:0007669"/>
    <property type="project" value="UniProtKB-UniRule"/>
</dbReference>
<dbReference type="GO" id="GO:0003921">
    <property type="term" value="F:GMP synthase activity"/>
    <property type="evidence" value="ECO:0007669"/>
    <property type="project" value="InterPro"/>
</dbReference>
<dbReference type="CDD" id="cd01742">
    <property type="entry name" value="GATase1_GMP_Synthase"/>
    <property type="match status" value="1"/>
</dbReference>
<dbReference type="CDD" id="cd01997">
    <property type="entry name" value="GMP_synthase_C"/>
    <property type="match status" value="1"/>
</dbReference>
<dbReference type="FunFam" id="3.30.300.10:FF:000002">
    <property type="entry name" value="GMP synthase [glutamine-hydrolyzing]"/>
    <property type="match status" value="1"/>
</dbReference>
<dbReference type="FunFam" id="3.40.50.620:FF:000001">
    <property type="entry name" value="GMP synthase [glutamine-hydrolyzing]"/>
    <property type="match status" value="1"/>
</dbReference>
<dbReference type="FunFam" id="3.40.50.880:FF:000001">
    <property type="entry name" value="GMP synthase [glutamine-hydrolyzing]"/>
    <property type="match status" value="1"/>
</dbReference>
<dbReference type="Gene3D" id="3.30.300.10">
    <property type="match status" value="1"/>
</dbReference>
<dbReference type="Gene3D" id="3.40.50.880">
    <property type="match status" value="1"/>
</dbReference>
<dbReference type="Gene3D" id="3.40.50.620">
    <property type="entry name" value="HUPs"/>
    <property type="match status" value="1"/>
</dbReference>
<dbReference type="HAMAP" id="MF_00344">
    <property type="entry name" value="GMP_synthase"/>
    <property type="match status" value="1"/>
</dbReference>
<dbReference type="InterPro" id="IPR029062">
    <property type="entry name" value="Class_I_gatase-like"/>
</dbReference>
<dbReference type="InterPro" id="IPR017926">
    <property type="entry name" value="GATASE"/>
</dbReference>
<dbReference type="InterPro" id="IPR001674">
    <property type="entry name" value="GMP_synth_C"/>
</dbReference>
<dbReference type="InterPro" id="IPR004739">
    <property type="entry name" value="GMP_synth_GATase"/>
</dbReference>
<dbReference type="InterPro" id="IPR022955">
    <property type="entry name" value="GMP_synthase"/>
</dbReference>
<dbReference type="InterPro" id="IPR025777">
    <property type="entry name" value="GMPS_ATP_PPase_dom"/>
</dbReference>
<dbReference type="InterPro" id="IPR022310">
    <property type="entry name" value="NAD/GMP_synthase"/>
</dbReference>
<dbReference type="InterPro" id="IPR014729">
    <property type="entry name" value="Rossmann-like_a/b/a_fold"/>
</dbReference>
<dbReference type="NCBIfam" id="TIGR00884">
    <property type="entry name" value="guaA_Cterm"/>
    <property type="match status" value="1"/>
</dbReference>
<dbReference type="NCBIfam" id="TIGR00888">
    <property type="entry name" value="guaA_Nterm"/>
    <property type="match status" value="1"/>
</dbReference>
<dbReference type="NCBIfam" id="NF000848">
    <property type="entry name" value="PRK00074.1"/>
    <property type="match status" value="1"/>
</dbReference>
<dbReference type="PANTHER" id="PTHR11922:SF2">
    <property type="entry name" value="GMP SYNTHASE [GLUTAMINE-HYDROLYZING]"/>
    <property type="match status" value="1"/>
</dbReference>
<dbReference type="PANTHER" id="PTHR11922">
    <property type="entry name" value="GMP SYNTHASE-RELATED"/>
    <property type="match status" value="1"/>
</dbReference>
<dbReference type="Pfam" id="PF00117">
    <property type="entry name" value="GATase"/>
    <property type="match status" value="1"/>
</dbReference>
<dbReference type="Pfam" id="PF00958">
    <property type="entry name" value="GMP_synt_C"/>
    <property type="match status" value="1"/>
</dbReference>
<dbReference type="Pfam" id="PF02540">
    <property type="entry name" value="NAD_synthase"/>
    <property type="match status" value="1"/>
</dbReference>
<dbReference type="PRINTS" id="PR00097">
    <property type="entry name" value="ANTSNTHASEII"/>
</dbReference>
<dbReference type="PRINTS" id="PR00099">
    <property type="entry name" value="CPSGATASE"/>
</dbReference>
<dbReference type="PRINTS" id="PR00096">
    <property type="entry name" value="GATASE"/>
</dbReference>
<dbReference type="SUPFAM" id="SSF52402">
    <property type="entry name" value="Adenine nucleotide alpha hydrolases-like"/>
    <property type="match status" value="1"/>
</dbReference>
<dbReference type="SUPFAM" id="SSF52317">
    <property type="entry name" value="Class I glutamine amidotransferase-like"/>
    <property type="match status" value="1"/>
</dbReference>
<dbReference type="PROSITE" id="PS51273">
    <property type="entry name" value="GATASE_TYPE_1"/>
    <property type="match status" value="1"/>
</dbReference>
<dbReference type="PROSITE" id="PS51553">
    <property type="entry name" value="GMPS_ATP_PPASE"/>
    <property type="match status" value="1"/>
</dbReference>
<evidence type="ECO:0000255" key="1">
    <source>
        <dbReference type="HAMAP-Rule" id="MF_00344"/>
    </source>
</evidence>
<protein>
    <recommendedName>
        <fullName evidence="1">GMP synthase [glutamine-hydrolyzing]</fullName>
        <ecNumber evidence="1">6.3.5.2</ecNumber>
    </recommendedName>
    <alternativeName>
        <fullName evidence="1">GMP synthetase</fullName>
    </alternativeName>
    <alternativeName>
        <fullName evidence="1">Glutamine amidotransferase</fullName>
    </alternativeName>
</protein>
<comment type="function">
    <text evidence="1">Catalyzes the synthesis of GMP from XMP.</text>
</comment>
<comment type="catalytic activity">
    <reaction evidence="1">
        <text>XMP + L-glutamine + ATP + H2O = GMP + L-glutamate + AMP + diphosphate + 2 H(+)</text>
        <dbReference type="Rhea" id="RHEA:11680"/>
        <dbReference type="ChEBI" id="CHEBI:15377"/>
        <dbReference type="ChEBI" id="CHEBI:15378"/>
        <dbReference type="ChEBI" id="CHEBI:29985"/>
        <dbReference type="ChEBI" id="CHEBI:30616"/>
        <dbReference type="ChEBI" id="CHEBI:33019"/>
        <dbReference type="ChEBI" id="CHEBI:57464"/>
        <dbReference type="ChEBI" id="CHEBI:58115"/>
        <dbReference type="ChEBI" id="CHEBI:58359"/>
        <dbReference type="ChEBI" id="CHEBI:456215"/>
        <dbReference type="EC" id="6.3.5.2"/>
    </reaction>
</comment>
<comment type="pathway">
    <text evidence="1">Purine metabolism; GMP biosynthesis; GMP from XMP (L-Gln route): step 1/1.</text>
</comment>
<comment type="subunit">
    <text evidence="1">Homodimer.</text>
</comment>
<organism>
    <name type="scientific">Enterococcus faecalis (strain ATCC 700802 / V583)</name>
    <dbReference type="NCBI Taxonomy" id="226185"/>
    <lineage>
        <taxon>Bacteria</taxon>
        <taxon>Bacillati</taxon>
        <taxon>Bacillota</taxon>
        <taxon>Bacilli</taxon>
        <taxon>Lactobacillales</taxon>
        <taxon>Enterococcaceae</taxon>
        <taxon>Enterococcus</taxon>
    </lineage>
</organism>